<evidence type="ECO:0000250" key="1"/>
<evidence type="ECO:0000255" key="2"/>
<evidence type="ECO:0000305" key="3"/>
<geneLocation type="mitochondrion"/>
<dbReference type="EC" id="7.1.1.2"/>
<dbReference type="EMBL" id="M27671">
    <property type="protein sequence ID" value="AAA32085.2"/>
    <property type="molecule type" value="Genomic_DNA"/>
</dbReference>
<dbReference type="SMR" id="Q35832"/>
<dbReference type="GO" id="GO:0005743">
    <property type="term" value="C:mitochondrial inner membrane"/>
    <property type="evidence" value="ECO:0007669"/>
    <property type="project" value="UniProtKB-SubCell"/>
</dbReference>
<dbReference type="GO" id="GO:0008137">
    <property type="term" value="F:NADH dehydrogenase (ubiquinone) activity"/>
    <property type="evidence" value="ECO:0007669"/>
    <property type="project" value="UniProtKB-EC"/>
</dbReference>
<name>NU5M_MESFR</name>
<sequence>MVINPSLIISTLNLGILAILLGSIFFFSKSYFSNENPSLPINKAASAHLSINNKSEAIEYNSGPFAMAILKALALLSVISLLVAINTEFSDINITLSLWLNNTPTNISLNFIYDQYFLIFLSIALIVTWS</sequence>
<keyword id="KW-0249">Electron transport</keyword>
<keyword id="KW-0472">Membrane</keyword>
<keyword id="KW-0496">Mitochondrion</keyword>
<keyword id="KW-0999">Mitochondrion inner membrane</keyword>
<keyword id="KW-0520">NAD</keyword>
<keyword id="KW-0679">Respiratory chain</keyword>
<keyword id="KW-1278">Translocase</keyword>
<keyword id="KW-0812">Transmembrane</keyword>
<keyword id="KW-1133">Transmembrane helix</keyword>
<keyword id="KW-0813">Transport</keyword>
<keyword id="KW-0830">Ubiquinone</keyword>
<comment type="function">
    <text evidence="1">Core subunit of the mitochondrial membrane respiratory chain NADH dehydrogenase (Complex I) that is believed to belong to the minimal assembly required for catalysis. Complex I functions in the transfer of electrons from NADH to the respiratory chain. The immediate electron acceptor for the enzyme is believed to be ubiquinone (By similarity).</text>
</comment>
<comment type="catalytic activity">
    <reaction>
        <text>a ubiquinone + NADH + 5 H(+)(in) = a ubiquinol + NAD(+) + 4 H(+)(out)</text>
        <dbReference type="Rhea" id="RHEA:29091"/>
        <dbReference type="Rhea" id="RHEA-COMP:9565"/>
        <dbReference type="Rhea" id="RHEA-COMP:9566"/>
        <dbReference type="ChEBI" id="CHEBI:15378"/>
        <dbReference type="ChEBI" id="CHEBI:16389"/>
        <dbReference type="ChEBI" id="CHEBI:17976"/>
        <dbReference type="ChEBI" id="CHEBI:57540"/>
        <dbReference type="ChEBI" id="CHEBI:57945"/>
        <dbReference type="EC" id="7.1.1.2"/>
    </reaction>
</comment>
<comment type="subcellular location">
    <subcellularLocation>
        <location evidence="1">Mitochondrion inner membrane</location>
        <topology evidence="1">Multi-pass membrane protein</topology>
    </subcellularLocation>
</comment>
<comment type="similarity">
    <text evidence="3">Belongs to the complex I subunit 5 family.</text>
</comment>
<organism>
    <name type="scientific">Mesocentrotus franciscanus</name>
    <name type="common">Giant red sea urchin</name>
    <name type="synonym">Strongylocentrotus franciscanus</name>
    <dbReference type="NCBI Taxonomy" id="1328066"/>
    <lineage>
        <taxon>Eukaryota</taxon>
        <taxon>Metazoa</taxon>
        <taxon>Echinodermata</taxon>
        <taxon>Eleutherozoa</taxon>
        <taxon>Echinozoa</taxon>
        <taxon>Echinoidea</taxon>
        <taxon>Euechinoidea</taxon>
        <taxon>Echinacea</taxon>
        <taxon>Camarodonta</taxon>
        <taxon>Echinidea</taxon>
        <taxon>Strongylocentrotidae</taxon>
        <taxon>Mesocentrotus</taxon>
    </lineage>
</organism>
<accession>Q35832</accession>
<proteinExistence type="inferred from homology"/>
<feature type="chain" id="PRO_0000118153" description="NADH-ubiquinone oxidoreductase chain 5">
    <location>
        <begin position="1"/>
        <end position="130" status="greater than"/>
    </location>
</feature>
<feature type="transmembrane region" description="Helical" evidence="2">
    <location>
        <begin position="7"/>
        <end position="27"/>
    </location>
</feature>
<feature type="transmembrane region" description="Helical" evidence="2">
    <location>
        <begin position="65"/>
        <end position="85"/>
    </location>
</feature>
<feature type="transmembrane region" description="Helical" evidence="2">
    <location>
        <begin position="107"/>
        <end position="127"/>
    </location>
</feature>
<feature type="non-terminal residue">
    <location>
        <position position="130"/>
    </location>
</feature>
<gene>
    <name type="primary">ND5</name>
</gene>
<protein>
    <recommendedName>
        <fullName>NADH-ubiquinone oxidoreductase chain 5</fullName>
        <ecNumber>7.1.1.2</ecNumber>
    </recommendedName>
    <alternativeName>
        <fullName>NADH dehydrogenase subunit 5</fullName>
    </alternativeName>
</protein>
<reference key="1">
    <citation type="journal article" date="1989" name="New Biol.">
        <title>Shifting constraints on tRNA genes during mitochondrial DNA evolution in animals.</title>
        <authorList>
            <person name="Thomas W.K."/>
            <person name="Maa J."/>
            <person name="Wilson A.C."/>
        </authorList>
    </citation>
    <scope>NUCLEOTIDE SEQUENCE [GENOMIC DNA]</scope>
</reference>